<proteinExistence type="evidence at protein level"/>
<reference key="1">
    <citation type="journal article" date="2000" name="Nature">
        <title>Sequence and analysis of chromosome 3 of the plant Arabidopsis thaliana.</title>
        <authorList>
            <person name="Salanoubat M."/>
            <person name="Lemcke K."/>
            <person name="Rieger M."/>
            <person name="Ansorge W."/>
            <person name="Unseld M."/>
            <person name="Fartmann B."/>
            <person name="Valle G."/>
            <person name="Bloecker H."/>
            <person name="Perez-Alonso M."/>
            <person name="Obermaier B."/>
            <person name="Delseny M."/>
            <person name="Boutry M."/>
            <person name="Grivell L.A."/>
            <person name="Mache R."/>
            <person name="Puigdomenech P."/>
            <person name="De Simone V."/>
            <person name="Choisne N."/>
            <person name="Artiguenave F."/>
            <person name="Robert C."/>
            <person name="Brottier P."/>
            <person name="Wincker P."/>
            <person name="Cattolico L."/>
            <person name="Weissenbach J."/>
            <person name="Saurin W."/>
            <person name="Quetier F."/>
            <person name="Schaefer M."/>
            <person name="Mueller-Auer S."/>
            <person name="Gabel C."/>
            <person name="Fuchs M."/>
            <person name="Benes V."/>
            <person name="Wurmbach E."/>
            <person name="Drzonek H."/>
            <person name="Erfle H."/>
            <person name="Jordan N."/>
            <person name="Bangert S."/>
            <person name="Wiedelmann R."/>
            <person name="Kranz H."/>
            <person name="Voss H."/>
            <person name="Holland R."/>
            <person name="Brandt P."/>
            <person name="Nyakatura G."/>
            <person name="Vezzi A."/>
            <person name="D'Angelo M."/>
            <person name="Pallavicini A."/>
            <person name="Toppo S."/>
            <person name="Simionati B."/>
            <person name="Conrad A."/>
            <person name="Hornischer K."/>
            <person name="Kauer G."/>
            <person name="Loehnert T.-H."/>
            <person name="Nordsiek G."/>
            <person name="Reichelt J."/>
            <person name="Scharfe M."/>
            <person name="Schoen O."/>
            <person name="Bargues M."/>
            <person name="Terol J."/>
            <person name="Climent J."/>
            <person name="Navarro P."/>
            <person name="Collado C."/>
            <person name="Perez-Perez A."/>
            <person name="Ottenwaelder B."/>
            <person name="Duchemin D."/>
            <person name="Cooke R."/>
            <person name="Laudie M."/>
            <person name="Berger-Llauro C."/>
            <person name="Purnelle B."/>
            <person name="Masuy D."/>
            <person name="de Haan M."/>
            <person name="Maarse A.C."/>
            <person name="Alcaraz J.-P."/>
            <person name="Cottet A."/>
            <person name="Casacuberta E."/>
            <person name="Monfort A."/>
            <person name="Argiriou A."/>
            <person name="Flores M."/>
            <person name="Liguori R."/>
            <person name="Vitale D."/>
            <person name="Mannhaupt G."/>
            <person name="Haase D."/>
            <person name="Schoof H."/>
            <person name="Rudd S."/>
            <person name="Zaccaria P."/>
            <person name="Mewes H.-W."/>
            <person name="Mayer K.F.X."/>
            <person name="Kaul S."/>
            <person name="Town C.D."/>
            <person name="Koo H.L."/>
            <person name="Tallon L.J."/>
            <person name="Jenkins J."/>
            <person name="Rooney T."/>
            <person name="Rizzo M."/>
            <person name="Walts A."/>
            <person name="Utterback T."/>
            <person name="Fujii C.Y."/>
            <person name="Shea T.P."/>
            <person name="Creasy T.H."/>
            <person name="Haas B."/>
            <person name="Maiti R."/>
            <person name="Wu D."/>
            <person name="Peterson J."/>
            <person name="Van Aken S."/>
            <person name="Pai G."/>
            <person name="Militscher J."/>
            <person name="Sellers P."/>
            <person name="Gill J.E."/>
            <person name="Feldblyum T.V."/>
            <person name="Preuss D."/>
            <person name="Lin X."/>
            <person name="Nierman W.C."/>
            <person name="Salzberg S.L."/>
            <person name="White O."/>
            <person name="Venter J.C."/>
            <person name="Fraser C.M."/>
            <person name="Kaneko T."/>
            <person name="Nakamura Y."/>
            <person name="Sato S."/>
            <person name="Kato T."/>
            <person name="Asamizu E."/>
            <person name="Sasamoto S."/>
            <person name="Kimura T."/>
            <person name="Idesawa K."/>
            <person name="Kawashima K."/>
            <person name="Kishida Y."/>
            <person name="Kiyokawa C."/>
            <person name="Kohara M."/>
            <person name="Matsumoto M."/>
            <person name="Matsuno A."/>
            <person name="Muraki A."/>
            <person name="Nakayama S."/>
            <person name="Nakazaki N."/>
            <person name="Shinpo S."/>
            <person name="Takeuchi C."/>
            <person name="Wada T."/>
            <person name="Watanabe A."/>
            <person name="Yamada M."/>
            <person name="Yasuda M."/>
            <person name="Tabata S."/>
        </authorList>
    </citation>
    <scope>NUCLEOTIDE SEQUENCE [LARGE SCALE GENOMIC DNA]</scope>
    <source>
        <strain>cv. Columbia</strain>
    </source>
</reference>
<reference key="2">
    <citation type="journal article" date="2017" name="Plant J.">
        <title>Araport11: a complete reannotation of the Arabidopsis thaliana reference genome.</title>
        <authorList>
            <person name="Cheng C.Y."/>
            <person name="Krishnakumar V."/>
            <person name="Chan A.P."/>
            <person name="Thibaud-Nissen F."/>
            <person name="Schobel S."/>
            <person name="Town C.D."/>
        </authorList>
    </citation>
    <scope>GENOME REANNOTATION</scope>
    <source>
        <strain>cv. Columbia</strain>
    </source>
</reference>
<reference key="3">
    <citation type="journal article" date="2003" name="Science">
        <title>Empirical analysis of transcriptional activity in the Arabidopsis genome.</title>
        <authorList>
            <person name="Yamada K."/>
            <person name="Lim J."/>
            <person name="Dale J.M."/>
            <person name="Chen H."/>
            <person name="Shinn P."/>
            <person name="Palm C.J."/>
            <person name="Southwick A.M."/>
            <person name="Wu H.C."/>
            <person name="Kim C.J."/>
            <person name="Nguyen M."/>
            <person name="Pham P.K."/>
            <person name="Cheuk R.F."/>
            <person name="Karlin-Newmann G."/>
            <person name="Liu S.X."/>
            <person name="Lam B."/>
            <person name="Sakano H."/>
            <person name="Wu T."/>
            <person name="Yu G."/>
            <person name="Miranda M."/>
            <person name="Quach H.L."/>
            <person name="Tripp M."/>
            <person name="Chang C.H."/>
            <person name="Lee J.M."/>
            <person name="Toriumi M.J."/>
            <person name="Chan M.M."/>
            <person name="Tang C.C."/>
            <person name="Onodera C.S."/>
            <person name="Deng J.M."/>
            <person name="Akiyama K."/>
            <person name="Ansari Y."/>
            <person name="Arakawa T."/>
            <person name="Banh J."/>
            <person name="Banno F."/>
            <person name="Bowser L."/>
            <person name="Brooks S.Y."/>
            <person name="Carninci P."/>
            <person name="Chao Q."/>
            <person name="Choy N."/>
            <person name="Enju A."/>
            <person name="Goldsmith A.D."/>
            <person name="Gurjal M."/>
            <person name="Hansen N.F."/>
            <person name="Hayashizaki Y."/>
            <person name="Johnson-Hopson C."/>
            <person name="Hsuan V.W."/>
            <person name="Iida K."/>
            <person name="Karnes M."/>
            <person name="Khan S."/>
            <person name="Koesema E."/>
            <person name="Ishida J."/>
            <person name="Jiang P.X."/>
            <person name="Jones T."/>
            <person name="Kawai J."/>
            <person name="Kamiya A."/>
            <person name="Meyers C."/>
            <person name="Nakajima M."/>
            <person name="Narusaka M."/>
            <person name="Seki M."/>
            <person name="Sakurai T."/>
            <person name="Satou M."/>
            <person name="Tamse R."/>
            <person name="Vaysberg M."/>
            <person name="Wallender E.K."/>
            <person name="Wong C."/>
            <person name="Yamamura Y."/>
            <person name="Yuan S."/>
            <person name="Shinozaki K."/>
            <person name="Davis R.W."/>
            <person name="Theologis A."/>
            <person name="Ecker J.R."/>
        </authorList>
    </citation>
    <scope>NUCLEOTIDE SEQUENCE [LARGE SCALE MRNA]</scope>
    <source>
        <strain>cv. Columbia</strain>
    </source>
</reference>
<reference key="4">
    <citation type="journal article" date="2006" name="Plant Cell">
        <title>GLABROUS INFLORESCENCE STEMS modulates the regulation by gibberellins of epidermal differentiation and shoot maturation in Arabidopsis.</title>
        <authorList>
            <person name="Gan Y."/>
            <person name="Kumimoto R."/>
            <person name="Liu C."/>
            <person name="Ratcliffe O."/>
            <person name="Yu H."/>
            <person name="Broun P."/>
        </authorList>
    </citation>
    <scope>FUNCTION</scope>
    <scope>TISSUE SPECIFICITY</scope>
    <scope>INDUCTION BY GIBBERELLIN</scope>
    <scope>DISRUPTION PHENOTYPE</scope>
</reference>
<reference key="5">
    <citation type="journal article" date="2007" name="Development">
        <title>Integration of cytokinin and gibberellin signalling by Arabidopsis transcription factors GIS, ZFP8 and GIS2 in the regulation of epidermal cell fate.</title>
        <authorList>
            <person name="Gan Y."/>
            <person name="Liu C."/>
            <person name="Yu H."/>
            <person name="Broun P."/>
        </authorList>
    </citation>
    <scope>FUNCTION</scope>
    <scope>DISRUPTION PHENOTYPE</scope>
</reference>
<reference key="6">
    <citation type="journal article" date="2012" name="Plant Cell Physiol.">
        <title>GLABROUS INFLORESCENCE STEMS (GIS) is required for trichome branching through gibberellic acid signaling in Arabidopsis.</title>
        <authorList>
            <person name="An L."/>
            <person name="Zhou Z."/>
            <person name="Su S."/>
            <person name="Yan A."/>
            <person name="Gan Y."/>
        </authorList>
    </citation>
    <scope>FUNCTION</scope>
    <scope>DISRUPTION PHENOTYPE</scope>
</reference>
<reference key="7">
    <citation type="journal article" date="2013" name="J. Zhejiang Univ. Sci. B">
        <title>GLABROUS INFLORESCENCE STEMS regulates trichome branching by genetically interacting with SIM in Arabidopsis.</title>
        <authorList>
            <person name="Sun L.L."/>
            <person name="Zhou Z.J."/>
            <person name="An L.J."/>
            <person name="An Y."/>
            <person name="Zhao Y.Q."/>
            <person name="Meng X.F."/>
            <person name="Steele-King C."/>
            <person name="Gan Y.B."/>
        </authorList>
    </citation>
    <scope>FUNCTION</scope>
</reference>
<evidence type="ECO:0000250" key="1">
    <source>
        <dbReference type="UniProtKB" id="Q9SLB8"/>
    </source>
</evidence>
<evidence type="ECO:0000255" key="2">
    <source>
        <dbReference type="PROSITE-ProRule" id="PRU00042"/>
    </source>
</evidence>
<evidence type="ECO:0000256" key="3">
    <source>
        <dbReference type="SAM" id="MobiDB-lite"/>
    </source>
</evidence>
<evidence type="ECO:0000269" key="4">
    <source>
    </source>
</evidence>
<evidence type="ECO:0000269" key="5">
    <source>
    </source>
</evidence>
<evidence type="ECO:0000269" key="6">
    <source>
    </source>
</evidence>
<evidence type="ECO:0000269" key="7">
    <source>
    </source>
</evidence>
<evidence type="ECO:0000305" key="8"/>
<evidence type="ECO:0000305" key="9">
    <source>
    </source>
</evidence>
<organism>
    <name type="scientific">Arabidopsis thaliana</name>
    <name type="common">Mouse-ear cress</name>
    <dbReference type="NCBI Taxonomy" id="3702"/>
    <lineage>
        <taxon>Eukaryota</taxon>
        <taxon>Viridiplantae</taxon>
        <taxon>Streptophyta</taxon>
        <taxon>Embryophyta</taxon>
        <taxon>Tracheophyta</taxon>
        <taxon>Spermatophyta</taxon>
        <taxon>Magnoliopsida</taxon>
        <taxon>eudicotyledons</taxon>
        <taxon>Gunneridae</taxon>
        <taxon>Pentapetalae</taxon>
        <taxon>rosids</taxon>
        <taxon>malvids</taxon>
        <taxon>Brassicales</taxon>
        <taxon>Brassicaceae</taxon>
        <taxon>Camelineae</taxon>
        <taxon>Arabidopsis</taxon>
    </lineage>
</organism>
<accession>Q84WI0</accession>
<accession>Q9M2P1</accession>
<protein>
    <recommendedName>
        <fullName>Zinc finger protein GIS</fullName>
    </recommendedName>
    <alternativeName>
        <fullName>Protein GLABROUS INFLORESCENCE STEMS</fullName>
    </alternativeName>
</protein>
<dbReference type="EMBL" id="AL132977">
    <property type="protein sequence ID" value="CAB67635.1"/>
    <property type="molecule type" value="Genomic_DNA"/>
</dbReference>
<dbReference type="EMBL" id="CP002686">
    <property type="protein sequence ID" value="AEE79738.1"/>
    <property type="molecule type" value="Genomic_DNA"/>
</dbReference>
<dbReference type="EMBL" id="BT003340">
    <property type="protein sequence ID" value="AAO29959.1"/>
    <property type="molecule type" value="mRNA"/>
</dbReference>
<dbReference type="EMBL" id="BT009676">
    <property type="protein sequence ID" value="AAP80177.1"/>
    <property type="molecule type" value="mRNA"/>
</dbReference>
<dbReference type="PIR" id="T46029">
    <property type="entry name" value="T46029"/>
</dbReference>
<dbReference type="RefSeq" id="NP_191366.1">
    <property type="nucleotide sequence ID" value="NM_115669.3"/>
</dbReference>
<dbReference type="BioGRID" id="10291">
    <property type="interactions" value="15"/>
</dbReference>
<dbReference type="IntAct" id="Q84WI0">
    <property type="interactions" value="15"/>
</dbReference>
<dbReference type="STRING" id="3702.Q84WI0"/>
<dbReference type="PaxDb" id="3702-AT3G58070.1"/>
<dbReference type="ProteomicsDB" id="220769"/>
<dbReference type="EnsemblPlants" id="AT3G58070.1">
    <property type="protein sequence ID" value="AT3G58070.1"/>
    <property type="gene ID" value="AT3G58070"/>
</dbReference>
<dbReference type="GeneID" id="824976"/>
<dbReference type="Gramene" id="AT3G58070.1">
    <property type="protein sequence ID" value="AT3G58070.1"/>
    <property type="gene ID" value="AT3G58070"/>
</dbReference>
<dbReference type="KEGG" id="ath:AT3G58070"/>
<dbReference type="Araport" id="AT3G58070"/>
<dbReference type="TAIR" id="AT3G58070">
    <property type="gene designation" value="GIS"/>
</dbReference>
<dbReference type="eggNOG" id="ENOG502R1BM">
    <property type="taxonomic scope" value="Eukaryota"/>
</dbReference>
<dbReference type="HOGENOM" id="CLU_058544_1_0_1"/>
<dbReference type="InParanoid" id="Q84WI0"/>
<dbReference type="OMA" id="FYRSHFR"/>
<dbReference type="PhylomeDB" id="Q84WI0"/>
<dbReference type="PRO" id="PR:Q84WI0"/>
<dbReference type="Proteomes" id="UP000006548">
    <property type="component" value="Chromosome 3"/>
</dbReference>
<dbReference type="ExpressionAtlas" id="Q84WI0">
    <property type="expression patterns" value="baseline and differential"/>
</dbReference>
<dbReference type="GO" id="GO:0005634">
    <property type="term" value="C:nucleus"/>
    <property type="evidence" value="ECO:0007669"/>
    <property type="project" value="UniProtKB-SubCell"/>
</dbReference>
<dbReference type="GO" id="GO:0003700">
    <property type="term" value="F:DNA-binding transcription factor activity"/>
    <property type="evidence" value="ECO:0000250"/>
    <property type="project" value="TAIR"/>
</dbReference>
<dbReference type="GO" id="GO:0000976">
    <property type="term" value="F:transcription cis-regulatory region binding"/>
    <property type="evidence" value="ECO:0000353"/>
    <property type="project" value="TAIR"/>
</dbReference>
<dbReference type="GO" id="GO:0008270">
    <property type="term" value="F:zinc ion binding"/>
    <property type="evidence" value="ECO:0007669"/>
    <property type="project" value="UniProtKB-KW"/>
</dbReference>
<dbReference type="GO" id="GO:0009740">
    <property type="term" value="P:gibberellic acid mediated signaling pathway"/>
    <property type="evidence" value="ECO:0007669"/>
    <property type="project" value="UniProtKB-KW"/>
</dbReference>
<dbReference type="GO" id="GO:0006355">
    <property type="term" value="P:regulation of DNA-templated transcription"/>
    <property type="evidence" value="ECO:0000304"/>
    <property type="project" value="TAIR"/>
</dbReference>
<dbReference type="GO" id="GO:0009739">
    <property type="term" value="P:response to gibberellin"/>
    <property type="evidence" value="ECO:0000315"/>
    <property type="project" value="TAIR"/>
</dbReference>
<dbReference type="GO" id="GO:0010091">
    <property type="term" value="P:trichome branching"/>
    <property type="evidence" value="ECO:0000315"/>
    <property type="project" value="TAIR"/>
</dbReference>
<dbReference type="GO" id="GO:0010026">
    <property type="term" value="P:trichome differentiation"/>
    <property type="evidence" value="ECO:0000315"/>
    <property type="project" value="TAIR"/>
</dbReference>
<dbReference type="InterPro" id="IPR044291">
    <property type="entry name" value="GIS/GIS2/ZFP8"/>
</dbReference>
<dbReference type="InterPro" id="IPR036236">
    <property type="entry name" value="Znf_C2H2_sf"/>
</dbReference>
<dbReference type="InterPro" id="IPR013087">
    <property type="entry name" value="Znf_C2H2_type"/>
</dbReference>
<dbReference type="PANTHER" id="PTHR46547">
    <property type="entry name" value="ZINC FINGER PROTEIN GIS"/>
    <property type="match status" value="1"/>
</dbReference>
<dbReference type="PANTHER" id="PTHR46547:SF7">
    <property type="entry name" value="ZINC FINGER PROTEIN GIS"/>
    <property type="match status" value="1"/>
</dbReference>
<dbReference type="Pfam" id="PF13912">
    <property type="entry name" value="zf-C2H2_6"/>
    <property type="match status" value="1"/>
</dbReference>
<dbReference type="SUPFAM" id="SSF57667">
    <property type="entry name" value="beta-beta-alpha zinc fingers"/>
    <property type="match status" value="1"/>
</dbReference>
<dbReference type="PROSITE" id="PS00028">
    <property type="entry name" value="ZINC_FINGER_C2H2_1"/>
    <property type="match status" value="1"/>
</dbReference>
<dbReference type="PROSITE" id="PS50157">
    <property type="entry name" value="ZINC_FINGER_C2H2_2"/>
    <property type="match status" value="1"/>
</dbReference>
<sequence length="253" mass="28457">MDEATGETETQDFMNVESFSQLPFIRRPKDKNPKPIRVFGKDFTGRDFSITTGQEDYTDPYQTKNKEEEEEEDQTGDNSTDNNSISHNRRFECHYCFRNFPTSQALGGHQNAHKRERQLAKRGVSSYFYHPDNNPYSYRHYPSWTNGPLTAARSYGGFSSGPKPSGYYTRPSYGSQLGLWRLPPRVQGVYNSNAAFTSNGSSSSSNSTLPLLTRSQTQLSSQVGGSAAQNRMSSYGYGLSPNVQDHVSLDLHL</sequence>
<name>GIS_ARATH</name>
<keyword id="KW-0217">Developmental protein</keyword>
<keyword id="KW-0221">Differentiation</keyword>
<keyword id="KW-0939">Gibberellin signaling pathway</keyword>
<keyword id="KW-0479">Metal-binding</keyword>
<keyword id="KW-0539">Nucleus</keyword>
<keyword id="KW-1185">Reference proteome</keyword>
<keyword id="KW-0804">Transcription</keyword>
<keyword id="KW-0805">Transcription regulation</keyword>
<keyword id="KW-0862">Zinc</keyword>
<keyword id="KW-0863">Zinc-finger</keyword>
<comment type="function">
    <text evidence="4 5 6 7">Probable transcription factor required for the initiation of inflorescence trichomes in response to gibberellin (GA) (PubMed:16679458, PubMed:17507408). Mediates the induction of GL1 expression by GA in inflorescence organs and is antagonized in its action by the DELLA repressor GAI. Acts upstream of the trichome initiation regulators GL1 and GL3, and downstream of the GA signaling repressor SPINDLY (SPY) (PubMed:16679458). Does not play a significant role in the cytokinin response (PubMed:17507408). Controls trichome branching through GA signaling (PubMed:22210898, PubMed:23825141). Acts downstream of the key regulator STICHEL (STI) in an endoreduplication-independent pathway (PubMed:22210898). Controls trichome cell division indirectly by acting downstream of a key endoreduplication regulator SIAMESE (SIM) (PubMed:23825141).</text>
</comment>
<comment type="interaction">
    <interactant intactId="EBI-15195983">
        <id>Q84WI0</id>
    </interactant>
    <interactant intactId="EBI-4425094">
        <id>O82239</id>
        <label>RFI2</label>
    </interactant>
    <organismsDiffer>false</organismsDiffer>
    <experiments>3</experiments>
</comment>
<comment type="interaction">
    <interactant intactId="EBI-15195983">
        <id>Q84WI0</id>
    </interactant>
    <interactant intactId="EBI-15192325">
        <id>Q8LPR5</id>
        <label>TCP4</label>
    </interactant>
    <organismsDiffer>false</organismsDiffer>
    <experiments>3</experiments>
</comment>
<comment type="subcellular location">
    <subcellularLocation>
        <location evidence="1">Nucleus</location>
    </subcellularLocation>
</comment>
<comment type="tissue specificity">
    <text evidence="4">Expressed in inflorescence meristems, floral meristems and stem epidermis.</text>
</comment>
<comment type="induction">
    <text evidence="4">By gibberellin.</text>
</comment>
<comment type="disruption phenotype">
    <text evidence="4 5 6">Reduced trichome production on cauline leaves, stem internodes and branches, and sepals.</text>
</comment>
<comment type="miscellaneous">
    <text evidence="9">Plants over-expressing GIS have delayed shoot maturation and flowering, and a strong production of trichome on the inflorescence.</text>
</comment>
<gene>
    <name type="primary">GIS</name>
    <name type="ordered locus">At3g58070</name>
    <name type="ORF">T10K17.280</name>
</gene>
<feature type="chain" id="PRO_0000425724" description="Zinc finger protein GIS">
    <location>
        <begin position="1"/>
        <end position="253"/>
    </location>
</feature>
<feature type="zinc finger region" description="C2H2-type" evidence="2">
    <location>
        <begin position="91"/>
        <end position="113"/>
    </location>
</feature>
<feature type="region of interest" description="Disordered" evidence="3">
    <location>
        <begin position="1"/>
        <end position="85"/>
    </location>
</feature>
<feature type="compositionally biased region" description="Acidic residues" evidence="3">
    <location>
        <begin position="1"/>
        <end position="10"/>
    </location>
</feature>
<feature type="compositionally biased region" description="Polar residues" evidence="3">
    <location>
        <begin position="11"/>
        <end position="21"/>
    </location>
</feature>
<feature type="compositionally biased region" description="Polar residues" evidence="3">
    <location>
        <begin position="49"/>
        <end position="63"/>
    </location>
</feature>
<feature type="compositionally biased region" description="Polar residues" evidence="3">
    <location>
        <begin position="76"/>
        <end position="85"/>
    </location>
</feature>
<feature type="sequence conflict" description="In Ref. 1; CAB67635." evidence="8" ref="1">
    <original>T</original>
    <variation>S</variation>
    <location>
        <position position="169"/>
    </location>
</feature>